<comment type="function">
    <text evidence="1">Catalyzes the reversible conversion of 2-phosphoglycerate (2-PG) into phosphoenolpyruvate (PEP). It is essential for the degradation of carbohydrates via glycolysis.</text>
</comment>
<comment type="catalytic activity">
    <reaction evidence="1">
        <text>(2R)-2-phosphoglycerate = phosphoenolpyruvate + H2O</text>
        <dbReference type="Rhea" id="RHEA:10164"/>
        <dbReference type="ChEBI" id="CHEBI:15377"/>
        <dbReference type="ChEBI" id="CHEBI:58289"/>
        <dbReference type="ChEBI" id="CHEBI:58702"/>
        <dbReference type="EC" id="4.2.1.11"/>
    </reaction>
</comment>
<comment type="cofactor">
    <cofactor evidence="1">
        <name>Mg(2+)</name>
        <dbReference type="ChEBI" id="CHEBI:18420"/>
    </cofactor>
    <text evidence="1">Binds a second Mg(2+) ion via substrate during catalysis.</text>
</comment>
<comment type="pathway">
    <text evidence="1">Carbohydrate degradation; glycolysis; pyruvate from D-glyceraldehyde 3-phosphate: step 4/5.</text>
</comment>
<comment type="subcellular location">
    <subcellularLocation>
        <location evidence="1">Cytoplasm</location>
    </subcellularLocation>
    <subcellularLocation>
        <location evidence="1">Secreted</location>
    </subcellularLocation>
    <subcellularLocation>
        <location evidence="1">Cell surface</location>
    </subcellularLocation>
    <text evidence="1">Fractions of enolase are present in both the cytoplasm and on the cell surface.</text>
</comment>
<comment type="similarity">
    <text evidence="1">Belongs to the enolase family.</text>
</comment>
<reference key="1">
    <citation type="journal article" date="2005" name="Proc. Natl. Acad. Sci. U.S.A.">
        <title>Genome analysis of multiple pathogenic isolates of Streptococcus agalactiae: implications for the microbial 'pan-genome'.</title>
        <authorList>
            <person name="Tettelin H."/>
            <person name="Masignani V."/>
            <person name="Cieslewicz M.J."/>
            <person name="Donati C."/>
            <person name="Medini D."/>
            <person name="Ward N.L."/>
            <person name="Angiuoli S.V."/>
            <person name="Crabtree J."/>
            <person name="Jones A.L."/>
            <person name="Durkin A.S."/>
            <person name="DeBoy R.T."/>
            <person name="Davidsen T.M."/>
            <person name="Mora M."/>
            <person name="Scarselli M."/>
            <person name="Margarit y Ros I."/>
            <person name="Peterson J.D."/>
            <person name="Hauser C.R."/>
            <person name="Sundaram J.P."/>
            <person name="Nelson W.C."/>
            <person name="Madupu R."/>
            <person name="Brinkac L.M."/>
            <person name="Dodson R.J."/>
            <person name="Rosovitz M.J."/>
            <person name="Sullivan S.A."/>
            <person name="Daugherty S.C."/>
            <person name="Haft D.H."/>
            <person name="Selengut J."/>
            <person name="Gwinn M.L."/>
            <person name="Zhou L."/>
            <person name="Zafar N."/>
            <person name="Khouri H."/>
            <person name="Radune D."/>
            <person name="Dimitrov G."/>
            <person name="Watkins K."/>
            <person name="O'Connor K.J."/>
            <person name="Smith S."/>
            <person name="Utterback T.R."/>
            <person name="White O."/>
            <person name="Rubens C.E."/>
            <person name="Grandi G."/>
            <person name="Madoff L.C."/>
            <person name="Kasper D.L."/>
            <person name="Telford J.L."/>
            <person name="Wessels M.R."/>
            <person name="Rappuoli R."/>
            <person name="Fraser C.M."/>
        </authorList>
    </citation>
    <scope>NUCLEOTIDE SEQUENCE [LARGE SCALE GENOMIC DNA]</scope>
    <source>
        <strain>ATCC 27591 / A909 / CDC SS700</strain>
    </source>
</reference>
<keyword id="KW-0963">Cytoplasm</keyword>
<keyword id="KW-0324">Glycolysis</keyword>
<keyword id="KW-0456">Lyase</keyword>
<keyword id="KW-0460">Magnesium</keyword>
<keyword id="KW-0479">Metal-binding</keyword>
<keyword id="KW-0964">Secreted</keyword>
<protein>
    <recommendedName>
        <fullName evidence="1">Enolase</fullName>
        <ecNumber evidence="1">4.2.1.11</ecNumber>
    </recommendedName>
    <alternativeName>
        <fullName evidence="1">2-phospho-D-glycerate hydro-lyase</fullName>
    </alternativeName>
    <alternativeName>
        <fullName evidence="1">2-phosphoglycerate dehydratase</fullName>
    </alternativeName>
</protein>
<feature type="chain" id="PRO_0000267115" description="Enolase">
    <location>
        <begin position="1"/>
        <end position="435"/>
    </location>
</feature>
<feature type="active site" description="Proton donor" evidence="1">
    <location>
        <position position="205"/>
    </location>
</feature>
<feature type="active site" description="Proton acceptor" evidence="1">
    <location>
        <position position="344"/>
    </location>
</feature>
<feature type="binding site" evidence="1">
    <location>
        <position position="163"/>
    </location>
    <ligand>
        <name>(2R)-2-phosphoglycerate</name>
        <dbReference type="ChEBI" id="CHEBI:58289"/>
    </ligand>
</feature>
<feature type="binding site" evidence="1">
    <location>
        <position position="243"/>
    </location>
    <ligand>
        <name>Mg(2+)</name>
        <dbReference type="ChEBI" id="CHEBI:18420"/>
    </ligand>
</feature>
<feature type="binding site" evidence="1">
    <location>
        <position position="292"/>
    </location>
    <ligand>
        <name>Mg(2+)</name>
        <dbReference type="ChEBI" id="CHEBI:18420"/>
    </ligand>
</feature>
<feature type="binding site" evidence="1">
    <location>
        <position position="319"/>
    </location>
    <ligand>
        <name>Mg(2+)</name>
        <dbReference type="ChEBI" id="CHEBI:18420"/>
    </ligand>
</feature>
<feature type="binding site" evidence="1">
    <location>
        <position position="344"/>
    </location>
    <ligand>
        <name>(2R)-2-phosphoglycerate</name>
        <dbReference type="ChEBI" id="CHEBI:58289"/>
    </ligand>
</feature>
<feature type="binding site" evidence="1">
    <location>
        <position position="373"/>
    </location>
    <ligand>
        <name>(2R)-2-phosphoglycerate</name>
        <dbReference type="ChEBI" id="CHEBI:58289"/>
    </ligand>
</feature>
<feature type="binding site" evidence="1">
    <location>
        <position position="374"/>
    </location>
    <ligand>
        <name>(2R)-2-phosphoglycerate</name>
        <dbReference type="ChEBI" id="CHEBI:58289"/>
    </ligand>
</feature>
<feature type="binding site" evidence="1">
    <location>
        <position position="395"/>
    </location>
    <ligand>
        <name>(2R)-2-phosphoglycerate</name>
        <dbReference type="ChEBI" id="CHEBI:58289"/>
    </ligand>
</feature>
<sequence>MSIITDVYAREVLDSRGNPTLEVEVYTESGAFGRGMVPSGASTGEHEAVELRDGDKSRYGGLGTQKAVDNVNNVIAEAIIGYDVRDQQAIDRAMIALDGTPNKGKLGANAILGVSIAVARAAADYLEVPLYSYLGGFNTKVLPTPMMNIINGGSHSDAPIAFQEFMIMPVGAPTFKEALRWGAEVFHALKKILKERGLETAVGDEGGFAPKFEGTEDGVETILKAIEAAGYEAGENGIMIGFDCASSEFYDAERKVYDYSKFEGEGGAVRTAAEQIDYLEELVNKYPIITIEDGMDENDWDGWKALTERLGGRVQLVGDDFFVTNTDYLARGIKEEAANSILIKVNQIGTLTETFEAIEMAKEAGYTAVVSHRSGETEDSTIADIAVATNAGQIKTGSLSRTDRIAKYNQLLRIEDQLGEVAQYKGIKSFYNLKK</sequence>
<name>ENO_STRA1</name>
<dbReference type="EC" id="4.2.1.11" evidence="1"/>
<dbReference type="EMBL" id="CP000114">
    <property type="protein sequence ID" value="ABA45999.1"/>
    <property type="molecule type" value="Genomic_DNA"/>
</dbReference>
<dbReference type="RefSeq" id="WP_000022832.1">
    <property type="nucleotide sequence ID" value="NC_007432.1"/>
</dbReference>
<dbReference type="SMR" id="Q3K2B2"/>
<dbReference type="GeneID" id="66885541"/>
<dbReference type="KEGG" id="sak:SAK_0713"/>
<dbReference type="HOGENOM" id="CLU_031223_2_1_9"/>
<dbReference type="UniPathway" id="UPA00109">
    <property type="reaction ID" value="UER00187"/>
</dbReference>
<dbReference type="GO" id="GO:0009986">
    <property type="term" value="C:cell surface"/>
    <property type="evidence" value="ECO:0007669"/>
    <property type="project" value="UniProtKB-SubCell"/>
</dbReference>
<dbReference type="GO" id="GO:0005576">
    <property type="term" value="C:extracellular region"/>
    <property type="evidence" value="ECO:0007669"/>
    <property type="project" value="UniProtKB-SubCell"/>
</dbReference>
<dbReference type="GO" id="GO:0009274">
    <property type="term" value="C:peptidoglycan-based cell wall"/>
    <property type="evidence" value="ECO:0007669"/>
    <property type="project" value="UniProtKB-ARBA"/>
</dbReference>
<dbReference type="GO" id="GO:0000015">
    <property type="term" value="C:phosphopyruvate hydratase complex"/>
    <property type="evidence" value="ECO:0007669"/>
    <property type="project" value="InterPro"/>
</dbReference>
<dbReference type="GO" id="GO:0000287">
    <property type="term" value="F:magnesium ion binding"/>
    <property type="evidence" value="ECO:0007669"/>
    <property type="project" value="UniProtKB-UniRule"/>
</dbReference>
<dbReference type="GO" id="GO:0004634">
    <property type="term" value="F:phosphopyruvate hydratase activity"/>
    <property type="evidence" value="ECO:0007669"/>
    <property type="project" value="UniProtKB-UniRule"/>
</dbReference>
<dbReference type="GO" id="GO:0006096">
    <property type="term" value="P:glycolytic process"/>
    <property type="evidence" value="ECO:0007669"/>
    <property type="project" value="UniProtKB-UniRule"/>
</dbReference>
<dbReference type="CDD" id="cd03313">
    <property type="entry name" value="enolase"/>
    <property type="match status" value="1"/>
</dbReference>
<dbReference type="FunFam" id="3.20.20.120:FF:000001">
    <property type="entry name" value="Enolase"/>
    <property type="match status" value="1"/>
</dbReference>
<dbReference type="FunFam" id="3.30.390.10:FF:000001">
    <property type="entry name" value="Enolase"/>
    <property type="match status" value="1"/>
</dbReference>
<dbReference type="Gene3D" id="3.20.20.120">
    <property type="entry name" value="Enolase-like C-terminal domain"/>
    <property type="match status" value="1"/>
</dbReference>
<dbReference type="Gene3D" id="3.30.390.10">
    <property type="entry name" value="Enolase-like, N-terminal domain"/>
    <property type="match status" value="1"/>
</dbReference>
<dbReference type="HAMAP" id="MF_00318">
    <property type="entry name" value="Enolase"/>
    <property type="match status" value="1"/>
</dbReference>
<dbReference type="InterPro" id="IPR000941">
    <property type="entry name" value="Enolase"/>
</dbReference>
<dbReference type="InterPro" id="IPR036849">
    <property type="entry name" value="Enolase-like_C_sf"/>
</dbReference>
<dbReference type="InterPro" id="IPR029017">
    <property type="entry name" value="Enolase-like_N"/>
</dbReference>
<dbReference type="InterPro" id="IPR020810">
    <property type="entry name" value="Enolase_C"/>
</dbReference>
<dbReference type="InterPro" id="IPR020809">
    <property type="entry name" value="Enolase_CS"/>
</dbReference>
<dbReference type="InterPro" id="IPR020811">
    <property type="entry name" value="Enolase_N"/>
</dbReference>
<dbReference type="NCBIfam" id="TIGR01060">
    <property type="entry name" value="eno"/>
    <property type="match status" value="1"/>
</dbReference>
<dbReference type="PANTHER" id="PTHR11902">
    <property type="entry name" value="ENOLASE"/>
    <property type="match status" value="1"/>
</dbReference>
<dbReference type="PANTHER" id="PTHR11902:SF1">
    <property type="entry name" value="ENOLASE"/>
    <property type="match status" value="1"/>
</dbReference>
<dbReference type="Pfam" id="PF00113">
    <property type="entry name" value="Enolase_C"/>
    <property type="match status" value="1"/>
</dbReference>
<dbReference type="Pfam" id="PF03952">
    <property type="entry name" value="Enolase_N"/>
    <property type="match status" value="1"/>
</dbReference>
<dbReference type="PIRSF" id="PIRSF001400">
    <property type="entry name" value="Enolase"/>
    <property type="match status" value="1"/>
</dbReference>
<dbReference type="PRINTS" id="PR00148">
    <property type="entry name" value="ENOLASE"/>
</dbReference>
<dbReference type="SFLD" id="SFLDS00001">
    <property type="entry name" value="Enolase"/>
    <property type="match status" value="1"/>
</dbReference>
<dbReference type="SFLD" id="SFLDF00002">
    <property type="entry name" value="enolase"/>
    <property type="match status" value="1"/>
</dbReference>
<dbReference type="SMART" id="SM01192">
    <property type="entry name" value="Enolase_C"/>
    <property type="match status" value="1"/>
</dbReference>
<dbReference type="SMART" id="SM01193">
    <property type="entry name" value="Enolase_N"/>
    <property type="match status" value="1"/>
</dbReference>
<dbReference type="SUPFAM" id="SSF51604">
    <property type="entry name" value="Enolase C-terminal domain-like"/>
    <property type="match status" value="1"/>
</dbReference>
<dbReference type="SUPFAM" id="SSF54826">
    <property type="entry name" value="Enolase N-terminal domain-like"/>
    <property type="match status" value="1"/>
</dbReference>
<dbReference type="PROSITE" id="PS00164">
    <property type="entry name" value="ENOLASE"/>
    <property type="match status" value="1"/>
</dbReference>
<evidence type="ECO:0000255" key="1">
    <source>
        <dbReference type="HAMAP-Rule" id="MF_00318"/>
    </source>
</evidence>
<proteinExistence type="inferred from homology"/>
<gene>
    <name evidence="1" type="primary">eno</name>
    <name type="ordered locus">SAK_0713</name>
</gene>
<organism>
    <name type="scientific">Streptococcus agalactiae serotype Ia (strain ATCC 27591 / A909 / CDC SS700)</name>
    <dbReference type="NCBI Taxonomy" id="205921"/>
    <lineage>
        <taxon>Bacteria</taxon>
        <taxon>Bacillati</taxon>
        <taxon>Bacillota</taxon>
        <taxon>Bacilli</taxon>
        <taxon>Lactobacillales</taxon>
        <taxon>Streptococcaceae</taxon>
        <taxon>Streptococcus</taxon>
    </lineage>
</organism>
<accession>Q3K2B2</accession>